<gene>
    <name type="primary">trpB</name>
    <name type="ordered locus">STM1726</name>
</gene>
<protein>
    <recommendedName>
        <fullName>Tryptophan synthase beta chain</fullName>
        <ecNumber>4.2.1.20</ecNumber>
    </recommendedName>
</protein>
<name>TRPB_SALTY</name>
<comment type="function">
    <text>The beta subunit is responsible for the synthesis of L-tryptophan from indole and L-serine.</text>
</comment>
<comment type="catalytic activity">
    <reaction>
        <text>(1S,2R)-1-C-(indol-3-yl)glycerol 3-phosphate + L-serine = D-glyceraldehyde 3-phosphate + L-tryptophan + H2O</text>
        <dbReference type="Rhea" id="RHEA:10532"/>
        <dbReference type="ChEBI" id="CHEBI:15377"/>
        <dbReference type="ChEBI" id="CHEBI:33384"/>
        <dbReference type="ChEBI" id="CHEBI:57912"/>
        <dbReference type="ChEBI" id="CHEBI:58866"/>
        <dbReference type="ChEBI" id="CHEBI:59776"/>
        <dbReference type="EC" id="4.2.1.20"/>
    </reaction>
</comment>
<comment type="cofactor">
    <cofactor>
        <name>pyridoxal 5'-phosphate</name>
        <dbReference type="ChEBI" id="CHEBI:597326"/>
    </cofactor>
</comment>
<comment type="pathway">
    <text>Amino-acid biosynthesis; L-tryptophan biosynthesis; L-tryptophan from chorismate: step 5/5.</text>
</comment>
<comment type="subunit">
    <text evidence="1">Tetramer of two alpha and two beta chains.</text>
</comment>
<comment type="interaction">
    <interactant intactId="EBI-1028431">
        <id>P0A2K1</id>
    </interactant>
    <interactant intactId="EBI-1028423">
        <id>P00929</id>
        <label>trpA</label>
    </interactant>
    <organismsDiffer>false</organismsDiffer>
    <experiments>24</experiments>
</comment>
<comment type="interaction">
    <interactant intactId="EBI-1028431">
        <id>P0A2K1</id>
    </interactant>
    <interactant intactId="EBI-1028431">
        <id>P0A2K1</id>
        <label>trpB</label>
    </interactant>
    <organismsDiffer>false</organismsDiffer>
    <experiments>3</experiments>
</comment>
<comment type="similarity">
    <text evidence="2">Belongs to the TrpB family.</text>
</comment>
<keyword id="KW-0002">3D-structure</keyword>
<keyword id="KW-0028">Amino-acid biosynthesis</keyword>
<keyword id="KW-0057">Aromatic amino acid biosynthesis</keyword>
<keyword id="KW-0456">Lyase</keyword>
<keyword id="KW-0663">Pyridoxal phosphate</keyword>
<keyword id="KW-1185">Reference proteome</keyword>
<keyword id="KW-0822">Tryptophan biosynthesis</keyword>
<sequence length="397" mass="42868">MTTLLNPYFGEFGGMYVPQILMPALNQLEEAFVSAQKDPEFQAQFADLLKNYAGRPTALTKCQNITAGTRTTLYLKREDLLHGGAHKTNQVLGQALLAKRMGKSEIIAETGAGQHGVASALASALLGLKCRIYMGAKDVERQSPNVFRMRLMGAEVIPVHSGSATLKDACNEALRDWSGSYETAHYMLGTAAGPHPYPTIVREFQRMIGEETKAQILDKEGRLPDAVIACVGGGSNAIGMFADFINDTSVGLIGVEPGGHGIETGEHGAPLKHGRVGIYFGMKAPMMQTADGQIEESYSISAGLDFPSVGPQHAYLNSIGRADYVSITDDEALEAFKTLCRHEGIIPALESSHALAHALKMMREQPEKEQLLVVNLSGRGDKDIFTVHDILKARGEI</sequence>
<organism>
    <name type="scientific">Salmonella typhimurium (strain LT2 / SGSC1412 / ATCC 700720)</name>
    <dbReference type="NCBI Taxonomy" id="99287"/>
    <lineage>
        <taxon>Bacteria</taxon>
        <taxon>Pseudomonadati</taxon>
        <taxon>Pseudomonadota</taxon>
        <taxon>Gammaproteobacteria</taxon>
        <taxon>Enterobacterales</taxon>
        <taxon>Enterobacteriaceae</taxon>
        <taxon>Salmonella</taxon>
    </lineage>
</organism>
<reference key="1">
    <citation type="journal article" date="1980" name="J. Mol. Biol.">
        <title>Nucleotide sequence of the trpB gene in Escherichia coli and Salmonella typhimurium.</title>
        <authorList>
            <person name="Crawford I.P."/>
            <person name="Nichols B.P."/>
            <person name="Yanofsky C."/>
        </authorList>
    </citation>
    <scope>NUCLEOTIDE SEQUENCE [GENOMIC DNA]</scope>
</reference>
<reference key="2">
    <citation type="journal article" date="2001" name="Nature">
        <title>Complete genome sequence of Salmonella enterica serovar Typhimurium LT2.</title>
        <authorList>
            <person name="McClelland M."/>
            <person name="Sanderson K.E."/>
            <person name="Spieth J."/>
            <person name="Clifton S.W."/>
            <person name="Latreille P."/>
            <person name="Courtney L."/>
            <person name="Porwollik S."/>
            <person name="Ali J."/>
            <person name="Dante M."/>
            <person name="Du F."/>
            <person name="Hou S."/>
            <person name="Layman D."/>
            <person name="Leonard S."/>
            <person name="Nguyen C."/>
            <person name="Scott K."/>
            <person name="Holmes A."/>
            <person name="Grewal N."/>
            <person name="Mulvaney E."/>
            <person name="Ryan E."/>
            <person name="Sun H."/>
            <person name="Florea L."/>
            <person name="Miller W."/>
            <person name="Stoneking T."/>
            <person name="Nhan M."/>
            <person name="Waterston R."/>
            <person name="Wilson R.K."/>
        </authorList>
    </citation>
    <scope>NUCLEOTIDE SEQUENCE [LARGE SCALE GENOMIC DNA]</scope>
    <source>
        <strain>LT2 / SGSC1412 / ATCC 700720</strain>
    </source>
</reference>
<reference key="3">
    <citation type="journal article" date="1979" name="Proc. Natl. Acad. Sci. U.S.A.">
        <title>Nucleotide sequences of trpA of Salmonella typhimurium and Escherichia coli: an evolutionary comparison.</title>
        <authorList>
            <person name="Nichols B.P."/>
            <person name="Yanofsky C."/>
        </authorList>
    </citation>
    <scope>NUCLEOTIDE SEQUENCE [GENOMIC DNA] OF 375-397</scope>
</reference>
<reference key="4">
    <citation type="journal article" date="1981" name="Proc. Natl. Acad. Sci. U.S.A.">
        <title>Procedure for production of hybrid genes and proteins and its use in assessing significance of amino acid differences in homologous tryptophan synthetase alpha polypeptides.</title>
        <authorList>
            <person name="Schneider W.P."/>
            <person name="Nichols B.P."/>
            <person name="Yanofsky C."/>
        </authorList>
    </citation>
    <scope>NUCLEOTIDE SEQUENCE [GENOMIC DNA] OF 375-397</scope>
</reference>
<reference key="5">
    <citation type="journal article" date="1979" name="J. Mol. Biol.">
        <title>Nucleotide sequence of the trpC-trpB intercistronic region from Salmonella typhimurium.</title>
        <authorList>
            <person name="Selker E."/>
            <person name="Yanofsky C."/>
        </authorList>
    </citation>
    <scope>NUCLEOTIDE SEQUENCE [GENOMIC DNA] OF 1-12</scope>
</reference>
<reference key="6">
    <citation type="journal article" date="1988" name="J. Biol. Chem.">
        <title>Three-dimensional structure of the tryptophan synthase alpha 2 beta 2 multienzyme complex from Salmonella typhimurium.</title>
        <authorList>
            <person name="Hyde C.C."/>
            <person name="Ahmed S.A."/>
            <person name="Padlan E.A."/>
            <person name="Miles E.W."/>
            <person name="Davies D.R."/>
        </authorList>
    </citation>
    <scope>X-RAY CRYSTALLOGRAPHY (2.5 ANGSTROMS)</scope>
</reference>
<reference key="7">
    <citation type="journal article" date="1997" name="Biochemistry">
        <title>Crystal structures of a mutant (betaK87T) tryptophan synthase alpha2beta2 complex with ligands bound to the active sites of the alpha- and beta-subunits reveal ligand-induced conformational changes.</title>
        <authorList>
            <person name="Rhee S."/>
            <person name="Parris K.D."/>
            <person name="Hyde C.C."/>
            <person name="Ahmed S.A."/>
            <person name="Miles E.W."/>
            <person name="Davies D.R."/>
        </authorList>
    </citation>
    <scope>X-RAY CRYSTALLOGRAPHY (1.9 ANGSTROMS) OF WILD TYPE AND TYR-87 MUTANTS IN COMPLEX WITH L-SERINE</scope>
    <scope>PYRIDOXAL PHOSPHATE AT LYS-87</scope>
</reference>
<reference key="8">
    <citation type="journal article" date="1998" name="J. Biol. Chem.">
        <title>Cryo-crystallography of a true substrate, indole-3-glycerol phosphate, bound to a mutant (alphaD60N) tryptophan synthase alpha2beta2 complex reveals the correct orientation of active site alphaGlu49.</title>
        <authorList>
            <person name="Rhee S."/>
            <person name="Miles E.W."/>
            <person name="Davies D.R."/>
        </authorList>
    </citation>
    <scope>X-RAY CRYSTALLOGRAPHY (1.9 ANGSTROMS)</scope>
</reference>
<reference key="9">
    <citation type="submission" date="1998-07" db="PDB data bank">
        <title>Refined structure of the native form of the tryptophan synthase multienzyme complex from Salmonella typhimurium.</title>
        <authorList>
            <person name="Hyde C.C."/>
            <person name="Parris K.D."/>
            <person name="Bhat T.N."/>
            <person name="Brown C."/>
            <person name="Ahmed S.A."/>
            <person name="Miles E.W."/>
            <person name="Davies D.R."/>
        </authorList>
    </citation>
    <scope>X-RAY CRYSTALLOGRAPHY (2.2 ANGSTROMS)</scope>
</reference>
<reference key="10">
    <citation type="journal article" date="1999" name="Biochemistry">
        <title>Crystallographic studies of phosphonate-based alpha-reaction transition-state analogues complexed to tryptophan synthase.</title>
        <authorList>
            <person name="Sachpatzidis A."/>
            <person name="Dealwis C."/>
            <person name="Lubetsky J.B."/>
            <person name="Liang P.-H."/>
            <person name="Anderson K.S."/>
            <person name="Lolis E."/>
        </authorList>
    </citation>
    <scope>X-RAY CRYSTALLOGRAPHY (2.0 ANGSTROMS)</scope>
</reference>
<reference key="11">
    <citation type="journal article" date="2000" name="J. Biol. Chem.">
        <title>Structural basis for the impaired channeling and allosteric inter-subunit communication in the beta A169L/beta C170W mutant of tryptophan synthase.</title>
        <authorList>
            <person name="Weyand M."/>
            <person name="Schlichting I."/>
        </authorList>
    </citation>
    <scope>X-RAY CRYSTALLOGRAPHY (2.25 ANGSTROMS)</scope>
</reference>
<proteinExistence type="evidence at protein level"/>
<evidence type="ECO:0000269" key="1">
    <source>
    </source>
</evidence>
<evidence type="ECO:0000305" key="2"/>
<evidence type="ECO:0007829" key="3">
    <source>
        <dbReference type="PDB" id="1A5A"/>
    </source>
</evidence>
<evidence type="ECO:0007829" key="4">
    <source>
        <dbReference type="PDB" id="1WBJ"/>
    </source>
</evidence>
<evidence type="ECO:0007829" key="5">
    <source>
        <dbReference type="PDB" id="2TSY"/>
    </source>
</evidence>
<evidence type="ECO:0007829" key="6">
    <source>
        <dbReference type="PDB" id="6XSY"/>
    </source>
</evidence>
<evidence type="ECO:0007829" key="7">
    <source>
        <dbReference type="PDB" id="7LKL"/>
    </source>
</evidence>
<evidence type="ECO:0007829" key="8">
    <source>
        <dbReference type="PDB" id="8EZC"/>
    </source>
</evidence>
<dbReference type="EC" id="4.2.1.20"/>
<dbReference type="EMBL" id="V01377">
    <property type="protein sequence ID" value="CAA24667.1"/>
    <property type="molecule type" value="Genomic_DNA"/>
</dbReference>
<dbReference type="EMBL" id="J01810">
    <property type="protein sequence ID" value="AAA27234.1"/>
    <property type="molecule type" value="Genomic_DNA"/>
</dbReference>
<dbReference type="EMBL" id="AE006468">
    <property type="protein sequence ID" value="AAL20644.1"/>
    <property type="molecule type" value="Genomic_DNA"/>
</dbReference>
<dbReference type="EMBL" id="V01376">
    <property type="protein sequence ID" value="CAA24665.1"/>
    <property type="molecule type" value="Genomic_DNA"/>
</dbReference>
<dbReference type="EMBL" id="V00364">
    <property type="protein sequence ID" value="CAA23661.1"/>
    <property type="molecule type" value="Genomic_DNA"/>
</dbReference>
<dbReference type="EMBL" id="M24299">
    <property type="protein sequence ID" value="AAA99293.1"/>
    <property type="molecule type" value="Genomic_DNA"/>
</dbReference>
<dbReference type="PIR" id="A01156">
    <property type="entry name" value="TSEBBT"/>
</dbReference>
<dbReference type="RefSeq" id="NP_460685.1">
    <property type="nucleotide sequence ID" value="NC_003197.2"/>
</dbReference>
<dbReference type="RefSeq" id="WP_000209485.1">
    <property type="nucleotide sequence ID" value="NC_003197.2"/>
</dbReference>
<dbReference type="PDB" id="1A50">
    <property type="method" value="X-ray"/>
    <property type="resolution" value="2.30 A"/>
    <property type="chains" value="B=2-397"/>
</dbReference>
<dbReference type="PDB" id="1A5A">
    <property type="method" value="X-ray"/>
    <property type="resolution" value="1.90 A"/>
    <property type="chains" value="B=1-395"/>
</dbReference>
<dbReference type="PDB" id="1A5B">
    <property type="method" value="X-ray"/>
    <property type="resolution" value="2.00 A"/>
    <property type="chains" value="B=1-395"/>
</dbReference>
<dbReference type="PDB" id="1A5S">
    <property type="method" value="X-ray"/>
    <property type="resolution" value="2.30 A"/>
    <property type="chains" value="B=1-397"/>
</dbReference>
<dbReference type="PDB" id="1BEU">
    <property type="method" value="X-ray"/>
    <property type="resolution" value="1.90 A"/>
    <property type="chains" value="B=1-395"/>
</dbReference>
<dbReference type="PDB" id="1BKS">
    <property type="method" value="X-ray"/>
    <property type="resolution" value="2.20 A"/>
    <property type="chains" value="B=1-397"/>
</dbReference>
<dbReference type="PDB" id="1C29">
    <property type="method" value="X-ray"/>
    <property type="resolution" value="2.30 A"/>
    <property type="chains" value="B=1-397"/>
</dbReference>
<dbReference type="PDB" id="1C8V">
    <property type="method" value="X-ray"/>
    <property type="resolution" value="2.20 A"/>
    <property type="chains" value="B=1-397"/>
</dbReference>
<dbReference type="PDB" id="1C9D">
    <property type="method" value="X-ray"/>
    <property type="resolution" value="2.30 A"/>
    <property type="chains" value="B=1-397"/>
</dbReference>
<dbReference type="PDB" id="1CW2">
    <property type="method" value="X-ray"/>
    <property type="resolution" value="2.00 A"/>
    <property type="chains" value="B=1-397"/>
</dbReference>
<dbReference type="PDB" id="1CX9">
    <property type="method" value="X-ray"/>
    <property type="resolution" value="2.30 A"/>
    <property type="chains" value="B=1-397"/>
</dbReference>
<dbReference type="PDB" id="1FUY">
    <property type="method" value="X-ray"/>
    <property type="resolution" value="2.25 A"/>
    <property type="chains" value="B=2-397"/>
</dbReference>
<dbReference type="PDB" id="1K3U">
    <property type="method" value="X-ray"/>
    <property type="resolution" value="1.70 A"/>
    <property type="chains" value="B=2-397"/>
</dbReference>
<dbReference type="PDB" id="1K7E">
    <property type="method" value="X-ray"/>
    <property type="resolution" value="2.30 A"/>
    <property type="chains" value="B=2-397"/>
</dbReference>
<dbReference type="PDB" id="1K7F">
    <property type="method" value="X-ray"/>
    <property type="resolution" value="1.90 A"/>
    <property type="chains" value="B=2-397"/>
</dbReference>
<dbReference type="PDB" id="1K7X">
    <property type="method" value="X-ray"/>
    <property type="resolution" value="1.70 A"/>
    <property type="chains" value="B=2-397"/>
</dbReference>
<dbReference type="PDB" id="1K8X">
    <property type="method" value="X-ray"/>
    <property type="resolution" value="1.90 A"/>
    <property type="chains" value="B=1-397"/>
</dbReference>
<dbReference type="PDB" id="1K8Y">
    <property type="method" value="X-ray"/>
    <property type="resolution" value="1.50 A"/>
    <property type="chains" value="B=2-397"/>
</dbReference>
<dbReference type="PDB" id="1K8Z">
    <property type="method" value="X-ray"/>
    <property type="resolution" value="1.70 A"/>
    <property type="chains" value="B=2-397"/>
</dbReference>
<dbReference type="PDB" id="1KFB">
    <property type="method" value="X-ray"/>
    <property type="resolution" value="1.90 A"/>
    <property type="chains" value="B=2-397"/>
</dbReference>
<dbReference type="PDB" id="1KFC">
    <property type="method" value="X-ray"/>
    <property type="resolution" value="1.50 A"/>
    <property type="chains" value="B=1-397"/>
</dbReference>
<dbReference type="PDB" id="1KFE">
    <property type="method" value="X-ray"/>
    <property type="resolution" value="1.75 A"/>
    <property type="chains" value="B=2-395"/>
</dbReference>
<dbReference type="PDB" id="1KFJ">
    <property type="method" value="X-ray"/>
    <property type="resolution" value="1.80 A"/>
    <property type="chains" value="B=1-397"/>
</dbReference>
<dbReference type="PDB" id="1KFK">
    <property type="method" value="X-ray"/>
    <property type="resolution" value="2.40 A"/>
    <property type="chains" value="B=1-397"/>
</dbReference>
<dbReference type="PDB" id="1QOP">
    <property type="method" value="X-ray"/>
    <property type="resolution" value="1.40 A"/>
    <property type="chains" value="B=2-397"/>
</dbReference>
<dbReference type="PDB" id="1QOQ">
    <property type="method" value="X-ray"/>
    <property type="resolution" value="1.80 A"/>
    <property type="chains" value="B=2-397"/>
</dbReference>
<dbReference type="PDB" id="1TJP">
    <property type="method" value="X-ray"/>
    <property type="resolution" value="1.50 A"/>
    <property type="chains" value="B=2-397"/>
</dbReference>
<dbReference type="PDB" id="1TTP">
    <property type="method" value="X-ray"/>
    <property type="resolution" value="2.30 A"/>
    <property type="chains" value="B=1-397"/>
</dbReference>
<dbReference type="PDB" id="1TTQ">
    <property type="method" value="X-ray"/>
    <property type="resolution" value="2.00 A"/>
    <property type="chains" value="B=1-397"/>
</dbReference>
<dbReference type="PDB" id="1UBS">
    <property type="method" value="X-ray"/>
    <property type="resolution" value="1.90 A"/>
    <property type="chains" value="B=1-395"/>
</dbReference>
<dbReference type="PDB" id="1WBJ">
    <property type="method" value="X-ray"/>
    <property type="resolution" value="1.50 A"/>
    <property type="chains" value="B=2-397"/>
</dbReference>
<dbReference type="PDB" id="2CLE">
    <property type="method" value="X-ray"/>
    <property type="resolution" value="1.50 A"/>
    <property type="chains" value="B=2-397"/>
</dbReference>
<dbReference type="PDB" id="2CLF">
    <property type="method" value="X-ray"/>
    <property type="resolution" value="1.70 A"/>
    <property type="chains" value="B=2-397"/>
</dbReference>
<dbReference type="PDB" id="2CLH">
    <property type="method" value="X-ray"/>
    <property type="resolution" value="1.70 A"/>
    <property type="chains" value="B=2-397"/>
</dbReference>
<dbReference type="PDB" id="2CLI">
    <property type="method" value="X-ray"/>
    <property type="resolution" value="1.70 A"/>
    <property type="chains" value="B=2-397"/>
</dbReference>
<dbReference type="PDB" id="2CLK">
    <property type="method" value="X-ray"/>
    <property type="resolution" value="1.50 A"/>
    <property type="chains" value="B=2-397"/>
</dbReference>
<dbReference type="PDB" id="2CLL">
    <property type="method" value="X-ray"/>
    <property type="resolution" value="1.60 A"/>
    <property type="chains" value="B=2-397"/>
</dbReference>
<dbReference type="PDB" id="2CLM">
    <property type="method" value="X-ray"/>
    <property type="resolution" value="1.51 A"/>
    <property type="chains" value="B=2-397"/>
</dbReference>
<dbReference type="PDB" id="2CLO">
    <property type="method" value="X-ray"/>
    <property type="resolution" value="1.50 A"/>
    <property type="chains" value="B=2-397"/>
</dbReference>
<dbReference type="PDB" id="2J9X">
    <property type="method" value="X-ray"/>
    <property type="resolution" value="1.90 A"/>
    <property type="chains" value="B=2-397"/>
</dbReference>
<dbReference type="PDB" id="2J9Y">
    <property type="method" value="X-ray"/>
    <property type="resolution" value="1.80 A"/>
    <property type="chains" value="B=1-397"/>
</dbReference>
<dbReference type="PDB" id="2J9Z">
    <property type="method" value="X-ray"/>
    <property type="resolution" value="1.80 A"/>
    <property type="chains" value="B=1-397"/>
</dbReference>
<dbReference type="PDB" id="2RH9">
    <property type="method" value="X-ray"/>
    <property type="resolution" value="1.70 A"/>
    <property type="chains" value="B=1-397"/>
</dbReference>
<dbReference type="PDB" id="2RHG">
    <property type="method" value="X-ray"/>
    <property type="resolution" value="2.00 A"/>
    <property type="chains" value="B=1-397"/>
</dbReference>
<dbReference type="PDB" id="2TRS">
    <property type="method" value="X-ray"/>
    <property type="resolution" value="2.04 A"/>
    <property type="chains" value="B=1-395"/>
</dbReference>
<dbReference type="PDB" id="2TSY">
    <property type="method" value="X-ray"/>
    <property type="resolution" value="2.50 A"/>
    <property type="chains" value="B=1-395"/>
</dbReference>
<dbReference type="PDB" id="2TYS">
    <property type="method" value="X-ray"/>
    <property type="resolution" value="1.90 A"/>
    <property type="chains" value="B=1-397"/>
</dbReference>
<dbReference type="PDB" id="2WSY">
    <property type="method" value="X-ray"/>
    <property type="resolution" value="3.05 A"/>
    <property type="chains" value="B=2-397"/>
</dbReference>
<dbReference type="PDB" id="3CEP">
    <property type="method" value="X-ray"/>
    <property type="resolution" value="2.10 A"/>
    <property type="chains" value="B=2-397"/>
</dbReference>
<dbReference type="PDB" id="3PR2">
    <property type="method" value="X-ray"/>
    <property type="resolution" value="1.85 A"/>
    <property type="chains" value="B=3-393"/>
</dbReference>
<dbReference type="PDB" id="4HN4">
    <property type="method" value="X-ray"/>
    <property type="resolution" value="1.64 A"/>
    <property type="chains" value="B=1-397"/>
</dbReference>
<dbReference type="PDB" id="4HPJ">
    <property type="method" value="X-ray"/>
    <property type="resolution" value="1.45 A"/>
    <property type="chains" value="B=1-397"/>
</dbReference>
<dbReference type="PDB" id="4HPX">
    <property type="method" value="X-ray"/>
    <property type="resolution" value="1.65 A"/>
    <property type="chains" value="B=1-397"/>
</dbReference>
<dbReference type="PDB" id="4HT3">
    <property type="method" value="X-ray"/>
    <property type="resolution" value="1.30 A"/>
    <property type="chains" value="B=1-397"/>
</dbReference>
<dbReference type="PDB" id="4KKX">
    <property type="method" value="X-ray"/>
    <property type="resolution" value="1.77 A"/>
    <property type="chains" value="B=1-397"/>
</dbReference>
<dbReference type="PDB" id="4WX2">
    <property type="method" value="X-ray"/>
    <property type="resolution" value="1.75 A"/>
    <property type="chains" value="B=1-397"/>
</dbReference>
<dbReference type="PDB" id="4XUG">
    <property type="method" value="X-ray"/>
    <property type="resolution" value="1.65 A"/>
    <property type="chains" value="B=1-397"/>
</dbReference>
<dbReference type="PDB" id="4Y6G">
    <property type="method" value="X-ray"/>
    <property type="resolution" value="1.65 A"/>
    <property type="chains" value="B=1-397"/>
</dbReference>
<dbReference type="PDB" id="4ZQC">
    <property type="method" value="X-ray"/>
    <property type="resolution" value="1.54 A"/>
    <property type="chains" value="B=1-397"/>
</dbReference>
<dbReference type="PDB" id="5BW6">
    <property type="method" value="X-ray"/>
    <property type="resolution" value="1.82 A"/>
    <property type="chains" value="B=1-397"/>
</dbReference>
<dbReference type="PDB" id="5CGQ">
    <property type="method" value="X-ray"/>
    <property type="resolution" value="1.18 A"/>
    <property type="chains" value="B=1-397"/>
</dbReference>
<dbReference type="PDB" id="6C73">
    <property type="method" value="X-ray"/>
    <property type="resolution" value="1.65 A"/>
    <property type="chains" value="B=2-396"/>
</dbReference>
<dbReference type="PDB" id="6D0V">
    <property type="method" value="X-ray"/>
    <property type="resolution" value="1.64 A"/>
    <property type="chains" value="B=1-394"/>
</dbReference>
<dbReference type="PDB" id="6DUC">
    <property type="method" value="X-ray"/>
    <property type="resolution" value="1.79 A"/>
    <property type="chains" value="B=1-397"/>
</dbReference>
<dbReference type="PDB" id="6DZ4">
    <property type="method" value="X-ray"/>
    <property type="resolution" value="1.45 A"/>
    <property type="chains" value="B=1-397"/>
</dbReference>
<dbReference type="PDB" id="6DZO">
    <property type="method" value="X-ray"/>
    <property type="resolution" value="1.64 A"/>
    <property type="chains" value="B=2-395"/>
</dbReference>
<dbReference type="PDB" id="6O1H">
    <property type="method" value="X-ray"/>
    <property type="resolution" value="1.64 A"/>
    <property type="chains" value="B=2-396"/>
</dbReference>
<dbReference type="PDB" id="6VFD">
    <property type="method" value="X-ray"/>
    <property type="resolution" value="1.70 A"/>
    <property type="chains" value="B=1-397"/>
</dbReference>
<dbReference type="PDB" id="6VNT">
    <property type="method" value="X-ray"/>
    <property type="resolution" value="1.25 A"/>
    <property type="chains" value="B=1-397"/>
</dbReference>
<dbReference type="PDB" id="6WDU">
    <property type="method" value="X-ray"/>
    <property type="resolution" value="1.40 A"/>
    <property type="chains" value="B=1-397"/>
</dbReference>
<dbReference type="PDB" id="6WX3">
    <property type="method" value="X-ray"/>
    <property type="resolution" value="1.20 A"/>
    <property type="chains" value="B=1-397"/>
</dbReference>
<dbReference type="PDB" id="6X0C">
    <property type="method" value="X-ray"/>
    <property type="resolution" value="1.45 A"/>
    <property type="chains" value="B=1-397"/>
</dbReference>
<dbReference type="PDB" id="6XE3">
    <property type="method" value="X-ray"/>
    <property type="resolution" value="1.55 A"/>
    <property type="chains" value="B=1-397"/>
</dbReference>
<dbReference type="PDB" id="6XIN">
    <property type="method" value="X-ray"/>
    <property type="resolution" value="1.75 A"/>
    <property type="chains" value="B=1-397"/>
</dbReference>
<dbReference type="PDB" id="6XNC">
    <property type="method" value="X-ray"/>
    <property type="resolution" value="2.11 A"/>
    <property type="chains" value="B=1-397"/>
</dbReference>
<dbReference type="PDB" id="6XOY">
    <property type="method" value="X-ray"/>
    <property type="resolution" value="1.64 A"/>
    <property type="chains" value="B=1-397"/>
</dbReference>
<dbReference type="PDB" id="6XRH">
    <property type="method" value="X-ray"/>
    <property type="resolution" value="1.44 A"/>
    <property type="chains" value="B=1-397"/>
</dbReference>
<dbReference type="PDB" id="6XSY">
    <property type="method" value="X-ray"/>
    <property type="resolution" value="1.55 A"/>
    <property type="chains" value="B=1-397"/>
</dbReference>
<dbReference type="PDB" id="6XT0">
    <property type="method" value="X-ray"/>
    <property type="resolution" value="1.37 A"/>
    <property type="chains" value="B=1-397"/>
</dbReference>
<dbReference type="PDB" id="7A20">
    <property type="method" value="X-ray"/>
    <property type="resolution" value="2.50 A"/>
    <property type="chains" value="A/B/C/D=5-397"/>
</dbReference>
<dbReference type="PDB" id="7JHW">
    <property type="method" value="X-ray"/>
    <property type="resolution" value="1.65 A"/>
    <property type="chains" value="B=1-397"/>
</dbReference>
<dbReference type="PDB" id="7JLL">
    <property type="method" value="X-ray"/>
    <property type="resolution" value="1.55 A"/>
    <property type="chains" value="B=1-397"/>
</dbReference>
<dbReference type="PDB" id="7JMQ">
    <property type="method" value="X-ray"/>
    <property type="resolution" value="1.60 A"/>
    <property type="chains" value="B=1-397"/>
</dbReference>
<dbReference type="PDB" id="7JQW">
    <property type="method" value="X-ray"/>
    <property type="resolution" value="1.70 A"/>
    <property type="chains" value="B=1-397"/>
</dbReference>
<dbReference type="PDB" id="7JTT">
    <property type="method" value="X-ray"/>
    <property type="resolution" value="1.64 A"/>
    <property type="chains" value="B=1-397"/>
</dbReference>
<dbReference type="PDB" id="7K0B">
    <property type="method" value="X-ray"/>
    <property type="resolution" value="1.57 A"/>
    <property type="chains" value="B=1-397"/>
</dbReference>
<dbReference type="PDB" id="7K5A">
    <property type="method" value="X-ray"/>
    <property type="resolution" value="1.50 A"/>
    <property type="chains" value="B=1-397"/>
</dbReference>
<dbReference type="PDB" id="7KA1">
    <property type="method" value="X-ray"/>
    <property type="resolution" value="1.60 A"/>
    <property type="chains" value="B=1-397"/>
</dbReference>
<dbReference type="PDB" id="7KBN">
    <property type="method" value="X-ray"/>
    <property type="resolution" value="1.60 A"/>
    <property type="chains" value="B=1-397"/>
</dbReference>
<dbReference type="PDB" id="7KH6">
    <property type="method" value="X-ray"/>
    <property type="resolution" value="1.45 A"/>
    <property type="chains" value="B=1-397"/>
</dbReference>
<dbReference type="PDB" id="7KI7">
    <property type="method" value="X-ray"/>
    <property type="resolution" value="1.75 A"/>
    <property type="chains" value="B=1-397"/>
</dbReference>
<dbReference type="PDB" id="7KMC">
    <property type="method" value="X-ray"/>
    <property type="resolution" value="1.50 A"/>
    <property type="chains" value="B=1-397"/>
</dbReference>
<dbReference type="PDB" id="7KQ9">
    <property type="method" value="X-ray"/>
    <property type="resolution" value="1.50 A"/>
    <property type="chains" value="B=1-397"/>
</dbReference>
<dbReference type="PDB" id="7KQF">
    <property type="method" value="X-ray"/>
    <property type="resolution" value="1.47 A"/>
    <property type="chains" value="B=1-397"/>
</dbReference>
<dbReference type="PDB" id="7KU9">
    <property type="method" value="X-ray"/>
    <property type="resolution" value="1.40 A"/>
    <property type="chains" value="B=1-397"/>
</dbReference>
<dbReference type="PDB" id="7KWV">
    <property type="method" value="X-ray"/>
    <property type="resolution" value="1.30 A"/>
    <property type="chains" value="B=1-397"/>
</dbReference>
<dbReference type="PDB" id="7KXC">
    <property type="method" value="X-ray"/>
    <property type="resolution" value="1.51 A"/>
    <property type="chains" value="B=1-397"/>
</dbReference>
<dbReference type="PDB" id="7KYT">
    <property type="method" value="X-ray"/>
    <property type="resolution" value="1.35 A"/>
    <property type="chains" value="B=1-397"/>
</dbReference>
<dbReference type="PDB" id="7L03">
    <property type="method" value="X-ray"/>
    <property type="resolution" value="1.60 A"/>
    <property type="chains" value="B=1-397"/>
</dbReference>
<dbReference type="PDB" id="7L1H">
    <property type="method" value="X-ray"/>
    <property type="resolution" value="1.50 A"/>
    <property type="chains" value="B=1-397"/>
</dbReference>
<dbReference type="PDB" id="7L47">
    <property type="method" value="X-ray"/>
    <property type="resolution" value="1.55 A"/>
    <property type="chains" value="B=1-397"/>
</dbReference>
<dbReference type="PDB" id="7L4D">
    <property type="method" value="X-ray"/>
    <property type="resolution" value="1.60 A"/>
    <property type="chains" value="B=1-397"/>
</dbReference>
<dbReference type="PDB" id="7L5H">
    <property type="method" value="X-ray"/>
    <property type="resolution" value="1.80 A"/>
    <property type="chains" value="B=1-397"/>
</dbReference>
<dbReference type="PDB" id="7LEV">
    <property type="method" value="X-ray"/>
    <property type="resolution" value="1.70 A"/>
    <property type="chains" value="B=1-397"/>
</dbReference>
<dbReference type="PDB" id="7LGX">
    <property type="method" value="X-ray"/>
    <property type="resolution" value="1.80 A"/>
    <property type="chains" value="B=1-397"/>
</dbReference>
<dbReference type="PDB" id="7LKL">
    <property type="method" value="X-ray"/>
    <property type="resolution" value="1.05 A"/>
    <property type="chains" value="B=1-397"/>
</dbReference>
<dbReference type="PDB" id="7LPF">
    <property type="method" value="X-ray"/>
    <property type="resolution" value="1.10 A"/>
    <property type="chains" value="B=1-397"/>
</dbReference>
<dbReference type="PDB" id="7LT4">
    <property type="method" value="X-ray"/>
    <property type="resolution" value="1.80 A"/>
    <property type="chains" value="B=1-397"/>
</dbReference>
<dbReference type="PDB" id="7LTP">
    <property type="method" value="X-ray"/>
    <property type="resolution" value="1.47 A"/>
    <property type="chains" value="B=1-397"/>
</dbReference>
<dbReference type="PDB" id="7LUT">
    <property type="method" value="X-ray"/>
    <property type="resolution" value="1.60 A"/>
    <property type="chains" value="B=1-397"/>
</dbReference>
<dbReference type="PDB" id="7LV5">
    <property type="method" value="X-ray"/>
    <property type="resolution" value="1.60 A"/>
    <property type="chains" value="B=1-397"/>
</dbReference>
<dbReference type="PDB" id="7LVX">
    <property type="method" value="X-ray"/>
    <property type="resolution" value="1.55 A"/>
    <property type="chains" value="B=1-397"/>
</dbReference>
<dbReference type="PDB" id="7LX1">
    <property type="method" value="X-ray"/>
    <property type="resolution" value="1.61 A"/>
    <property type="chains" value="B=1-397"/>
</dbReference>
<dbReference type="PDB" id="7LY8">
    <property type="method" value="X-ray"/>
    <property type="resolution" value="1.55 A"/>
    <property type="chains" value="B=1-397"/>
</dbReference>
<dbReference type="PDB" id="7M2L">
    <property type="method" value="X-ray"/>
    <property type="resolution" value="1.60 A"/>
    <property type="chains" value="B=1-397"/>
</dbReference>
<dbReference type="PDB" id="7M3S">
    <property type="method" value="X-ray"/>
    <property type="resolution" value="1.55 A"/>
    <property type="chains" value="B=1-397"/>
</dbReference>
<dbReference type="PDB" id="7ME8">
    <property type="method" value="X-ray"/>
    <property type="resolution" value="1.60 A"/>
    <property type="chains" value="B=1-397"/>
</dbReference>
<dbReference type="PDB" id="7MT4">
    <property type="method" value="X-ray"/>
    <property type="resolution" value="1.40 A"/>
    <property type="chains" value="B=1-397"/>
</dbReference>
<dbReference type="PDB" id="7MT5">
    <property type="method" value="X-ray"/>
    <property type="resolution" value="1.50 A"/>
    <property type="chains" value="B=1-397"/>
</dbReference>
<dbReference type="PDB" id="7MT6">
    <property type="method" value="X-ray"/>
    <property type="resolution" value="1.70 A"/>
    <property type="chains" value="B=1-397"/>
</dbReference>
<dbReference type="PDB" id="8B03">
    <property type="method" value="X-ray"/>
    <property type="resolution" value="2.22 A"/>
    <property type="chains" value="B=1-397"/>
</dbReference>
<dbReference type="PDB" id="8B05">
    <property type="method" value="X-ray"/>
    <property type="resolution" value="2.10 A"/>
    <property type="chains" value="B=1-397"/>
</dbReference>
<dbReference type="PDB" id="8B06">
    <property type="method" value="X-ray"/>
    <property type="resolution" value="2.49 A"/>
    <property type="chains" value="B=1-397"/>
</dbReference>
<dbReference type="PDB" id="8B08">
    <property type="method" value="X-ray"/>
    <property type="resolution" value="2.50 A"/>
    <property type="chains" value="B=1-397"/>
</dbReference>
<dbReference type="PDB" id="8EYP">
    <property type="method" value="Other"/>
    <property type="resolution" value="1.80 A"/>
    <property type="chains" value="B=1-397"/>
</dbReference>
<dbReference type="PDB" id="8EYS">
    <property type="method" value="X-ray"/>
    <property type="resolution" value="2.20 A"/>
    <property type="chains" value="B=1-397"/>
</dbReference>
<dbReference type="PDB" id="8EZC">
    <property type="method" value="X-ray"/>
    <property type="resolution" value="1.60 A"/>
    <property type="chains" value="B=1-397"/>
</dbReference>
<dbReference type="PDB" id="8RSX">
    <property type="method" value="X-ray"/>
    <property type="resolution" value="2.00 A"/>
    <property type="chains" value="E=2-395"/>
</dbReference>
<dbReference type="PDB" id="8RSY">
    <property type="method" value="X-ray"/>
    <property type="resolution" value="2.11 A"/>
    <property type="chains" value="E=2-395"/>
</dbReference>
<dbReference type="PDB" id="8RSZ">
    <property type="method" value="X-ray"/>
    <property type="resolution" value="2.20 A"/>
    <property type="chains" value="E=2-395"/>
</dbReference>
<dbReference type="PDBsum" id="1A50"/>
<dbReference type="PDBsum" id="1A5A"/>
<dbReference type="PDBsum" id="1A5B"/>
<dbReference type="PDBsum" id="1A5S"/>
<dbReference type="PDBsum" id="1BEU"/>
<dbReference type="PDBsum" id="1BKS"/>
<dbReference type="PDBsum" id="1C29"/>
<dbReference type="PDBsum" id="1C8V"/>
<dbReference type="PDBsum" id="1C9D"/>
<dbReference type="PDBsum" id="1CW2"/>
<dbReference type="PDBsum" id="1CX9"/>
<dbReference type="PDBsum" id="1FUY"/>
<dbReference type="PDBsum" id="1K3U"/>
<dbReference type="PDBsum" id="1K7E"/>
<dbReference type="PDBsum" id="1K7F"/>
<dbReference type="PDBsum" id="1K7X"/>
<dbReference type="PDBsum" id="1K8X"/>
<dbReference type="PDBsum" id="1K8Y"/>
<dbReference type="PDBsum" id="1K8Z"/>
<dbReference type="PDBsum" id="1KFB"/>
<dbReference type="PDBsum" id="1KFC"/>
<dbReference type="PDBsum" id="1KFE"/>
<dbReference type="PDBsum" id="1KFJ"/>
<dbReference type="PDBsum" id="1KFK"/>
<dbReference type="PDBsum" id="1QOP"/>
<dbReference type="PDBsum" id="1QOQ"/>
<dbReference type="PDBsum" id="1TJP"/>
<dbReference type="PDBsum" id="1TTP"/>
<dbReference type="PDBsum" id="1TTQ"/>
<dbReference type="PDBsum" id="1UBS"/>
<dbReference type="PDBsum" id="1WBJ"/>
<dbReference type="PDBsum" id="2CLE"/>
<dbReference type="PDBsum" id="2CLF"/>
<dbReference type="PDBsum" id="2CLH"/>
<dbReference type="PDBsum" id="2CLI"/>
<dbReference type="PDBsum" id="2CLK"/>
<dbReference type="PDBsum" id="2CLL"/>
<dbReference type="PDBsum" id="2CLM"/>
<dbReference type="PDBsum" id="2CLO"/>
<dbReference type="PDBsum" id="2J9X"/>
<dbReference type="PDBsum" id="2J9Y"/>
<dbReference type="PDBsum" id="2J9Z"/>
<dbReference type="PDBsum" id="2RH9"/>
<dbReference type="PDBsum" id="2RHG"/>
<dbReference type="PDBsum" id="2TRS"/>
<dbReference type="PDBsum" id="2TSY"/>
<dbReference type="PDBsum" id="2TYS"/>
<dbReference type="PDBsum" id="2WSY"/>
<dbReference type="PDBsum" id="3CEP"/>
<dbReference type="PDBsum" id="3PR2"/>
<dbReference type="PDBsum" id="4HN4"/>
<dbReference type="PDBsum" id="4HPJ"/>
<dbReference type="PDBsum" id="4HPX"/>
<dbReference type="PDBsum" id="4HT3"/>
<dbReference type="PDBsum" id="4KKX"/>
<dbReference type="PDBsum" id="4WX2"/>
<dbReference type="PDBsum" id="4XUG"/>
<dbReference type="PDBsum" id="4Y6G"/>
<dbReference type="PDBsum" id="4ZQC"/>
<dbReference type="PDBsum" id="5BW6"/>
<dbReference type="PDBsum" id="5CGQ"/>
<dbReference type="PDBsum" id="6C73"/>
<dbReference type="PDBsum" id="6D0V"/>
<dbReference type="PDBsum" id="6DUC"/>
<dbReference type="PDBsum" id="6DZ4"/>
<dbReference type="PDBsum" id="6DZO"/>
<dbReference type="PDBsum" id="6O1H"/>
<dbReference type="PDBsum" id="6VFD"/>
<dbReference type="PDBsum" id="6VNT"/>
<dbReference type="PDBsum" id="6WDU"/>
<dbReference type="PDBsum" id="6WX3"/>
<dbReference type="PDBsum" id="6X0C"/>
<dbReference type="PDBsum" id="6XE3"/>
<dbReference type="PDBsum" id="6XIN"/>
<dbReference type="PDBsum" id="6XNC"/>
<dbReference type="PDBsum" id="6XOY"/>
<dbReference type="PDBsum" id="6XRH"/>
<dbReference type="PDBsum" id="6XSY"/>
<dbReference type="PDBsum" id="6XT0"/>
<dbReference type="PDBsum" id="7A20"/>
<dbReference type="PDBsum" id="7JHW"/>
<dbReference type="PDBsum" id="7JLL"/>
<dbReference type="PDBsum" id="7JMQ"/>
<dbReference type="PDBsum" id="7JQW"/>
<dbReference type="PDBsum" id="7JTT"/>
<dbReference type="PDBsum" id="7K0B"/>
<dbReference type="PDBsum" id="7K5A"/>
<dbReference type="PDBsum" id="7KA1"/>
<dbReference type="PDBsum" id="7KBN"/>
<dbReference type="PDBsum" id="7KH6"/>
<dbReference type="PDBsum" id="7KI7"/>
<dbReference type="PDBsum" id="7KMC"/>
<dbReference type="PDBsum" id="7KQ9"/>
<dbReference type="PDBsum" id="7KQF"/>
<dbReference type="PDBsum" id="7KU9"/>
<dbReference type="PDBsum" id="7KWV"/>
<dbReference type="PDBsum" id="7KXC"/>
<dbReference type="PDBsum" id="7KYT"/>
<dbReference type="PDBsum" id="7L03"/>
<dbReference type="PDBsum" id="7L1H"/>
<dbReference type="PDBsum" id="7L47"/>
<dbReference type="PDBsum" id="7L4D"/>
<dbReference type="PDBsum" id="7L5H"/>
<dbReference type="PDBsum" id="7LEV"/>
<dbReference type="PDBsum" id="7LGX"/>
<dbReference type="PDBsum" id="7LKL"/>
<dbReference type="PDBsum" id="7LPF"/>
<dbReference type="PDBsum" id="7LT4"/>
<dbReference type="PDBsum" id="7LTP"/>
<dbReference type="PDBsum" id="7LUT"/>
<dbReference type="PDBsum" id="7LV5"/>
<dbReference type="PDBsum" id="7LVX"/>
<dbReference type="PDBsum" id="7LX1"/>
<dbReference type="PDBsum" id="7LY8"/>
<dbReference type="PDBsum" id="7M2L"/>
<dbReference type="PDBsum" id="7M3S"/>
<dbReference type="PDBsum" id="7ME8"/>
<dbReference type="PDBsum" id="7MT4"/>
<dbReference type="PDBsum" id="7MT5"/>
<dbReference type="PDBsum" id="7MT6"/>
<dbReference type="PDBsum" id="8B03"/>
<dbReference type="PDBsum" id="8B05"/>
<dbReference type="PDBsum" id="8B06"/>
<dbReference type="PDBsum" id="8B08"/>
<dbReference type="PDBsum" id="8EYP"/>
<dbReference type="PDBsum" id="8EYS"/>
<dbReference type="PDBsum" id="8EZC"/>
<dbReference type="PDBsum" id="8RSX"/>
<dbReference type="PDBsum" id="8RSY"/>
<dbReference type="PDBsum" id="8RSZ"/>
<dbReference type="SMR" id="P0A2K1"/>
<dbReference type="DIP" id="DIP-35707N"/>
<dbReference type="IntAct" id="P0A2K1">
    <property type="interactions" value="1"/>
</dbReference>
<dbReference type="MINT" id="P0A2K1"/>
<dbReference type="STRING" id="99287.STM1726"/>
<dbReference type="DrugBank" id="DB07748">
    <property type="generic name" value="2-({[4-(TRIFLUOROMETHOXY)PHENYL]SULFONYL}AMINO)ETHYL DIHYDROGEN PHOSPHATE"/>
</dbReference>
<dbReference type="DrugBank" id="DB07732">
    <property type="generic name" value="2-[(2-NAPHTHYLSULFONYL)AMINO]ETHYL DIHYDROGEN PHOSPHATE"/>
</dbReference>
<dbReference type="DrugBank" id="DB07745">
    <property type="generic name" value="2-{[4-(TRIFLUOROMETHOXY)BENZOYL]AMINO}ETHYL DIHYDROGEN PHOSPHATE"/>
</dbReference>
<dbReference type="DrugBank" id="DB07894">
    <property type="generic name" value="4-(2-HYDROXY-4-FLUOROPHENYLTHIO)-BUTYLPHOSPHONIC ACID"/>
</dbReference>
<dbReference type="DrugBank" id="DB07925">
    <property type="generic name" value="4-(2-HYDROXYPHENYLSULFINYL)-BUTYLPHOSPHONIC ACID"/>
</dbReference>
<dbReference type="DrugBank" id="DB07890">
    <property type="generic name" value="4-(2-HYDROXYPHENYLTHIO)-1-BUTENYLPHOSPHONIC ACID"/>
</dbReference>
<dbReference type="DrugBank" id="DB07773">
    <property type="generic name" value="5-FLUOROINDOLE PROPANOL PHOSPHATE"/>
</dbReference>
<dbReference type="DrugBank" id="DB04143">
    <property type="generic name" value="Indole-3-Glycerol Phosphate"/>
</dbReference>
<dbReference type="DrugBank" id="DB03171">
    <property type="generic name" value="Indole-3-Propanol Phosphate"/>
</dbReference>
<dbReference type="DrugBank" id="DB07951">
    <property type="generic name" value="N-(indole-3-acetyl)-L-aspartic acid"/>
</dbReference>
<dbReference type="DrugBank" id="DB07952">
    <property type="generic name" value="N-[1H-INDOL-3-YL-ACETYL]GLYCINE ACID"/>
</dbReference>
<dbReference type="DrugBank" id="DB07953">
    <property type="generic name" value="N-[1H-INDOL-3-YL-ACETYL]VALINE ACID"/>
</dbReference>
<dbReference type="PaxDb" id="99287-STM1726"/>
<dbReference type="GeneID" id="1253245"/>
<dbReference type="KEGG" id="stm:STM1726"/>
<dbReference type="PATRIC" id="fig|99287.12.peg.1822"/>
<dbReference type="HOGENOM" id="CLU_016734_3_1_6"/>
<dbReference type="OMA" id="PLTLCQN"/>
<dbReference type="PhylomeDB" id="P0A2K1"/>
<dbReference type="BioCyc" id="SENT99287:STM1726-MONOMER"/>
<dbReference type="UniPathway" id="UPA00035">
    <property type="reaction ID" value="UER00044"/>
</dbReference>
<dbReference type="EvolutionaryTrace" id="P0A2K1"/>
<dbReference type="Proteomes" id="UP000001014">
    <property type="component" value="Chromosome"/>
</dbReference>
<dbReference type="GO" id="GO:0005737">
    <property type="term" value="C:cytoplasm"/>
    <property type="evidence" value="ECO:0000318"/>
    <property type="project" value="GO_Central"/>
</dbReference>
<dbReference type="GO" id="GO:0042802">
    <property type="term" value="F:identical protein binding"/>
    <property type="evidence" value="ECO:0000353"/>
    <property type="project" value="IntAct"/>
</dbReference>
<dbReference type="GO" id="GO:0004834">
    <property type="term" value="F:tryptophan synthase activity"/>
    <property type="evidence" value="ECO:0007669"/>
    <property type="project" value="UniProtKB-UniRule"/>
</dbReference>
<dbReference type="GO" id="GO:0000162">
    <property type="term" value="P:L-tryptophan biosynthetic process"/>
    <property type="evidence" value="ECO:0000318"/>
    <property type="project" value="GO_Central"/>
</dbReference>
<dbReference type="CDD" id="cd06446">
    <property type="entry name" value="Trp-synth_B"/>
    <property type="match status" value="1"/>
</dbReference>
<dbReference type="FunFam" id="3.40.50.1100:FF:000001">
    <property type="entry name" value="Tryptophan synthase beta chain"/>
    <property type="match status" value="1"/>
</dbReference>
<dbReference type="FunFam" id="3.40.50.1100:FF:000004">
    <property type="entry name" value="Tryptophan synthase beta chain"/>
    <property type="match status" value="1"/>
</dbReference>
<dbReference type="Gene3D" id="3.40.50.1100">
    <property type="match status" value="2"/>
</dbReference>
<dbReference type="HAMAP" id="MF_00133">
    <property type="entry name" value="Trp_synth_beta"/>
    <property type="match status" value="1"/>
</dbReference>
<dbReference type="InterPro" id="IPR006653">
    <property type="entry name" value="Trp_synth_b_CS"/>
</dbReference>
<dbReference type="InterPro" id="IPR006654">
    <property type="entry name" value="Trp_synth_beta"/>
</dbReference>
<dbReference type="InterPro" id="IPR023026">
    <property type="entry name" value="Trp_synth_beta/beta-like"/>
</dbReference>
<dbReference type="InterPro" id="IPR001926">
    <property type="entry name" value="TrpB-like_PALP"/>
</dbReference>
<dbReference type="InterPro" id="IPR036052">
    <property type="entry name" value="TrpB-like_PALP_sf"/>
</dbReference>
<dbReference type="NCBIfam" id="TIGR00263">
    <property type="entry name" value="trpB"/>
    <property type="match status" value="1"/>
</dbReference>
<dbReference type="PANTHER" id="PTHR48077:SF3">
    <property type="entry name" value="TRYPTOPHAN SYNTHASE"/>
    <property type="match status" value="1"/>
</dbReference>
<dbReference type="PANTHER" id="PTHR48077">
    <property type="entry name" value="TRYPTOPHAN SYNTHASE-RELATED"/>
    <property type="match status" value="1"/>
</dbReference>
<dbReference type="Pfam" id="PF00291">
    <property type="entry name" value="PALP"/>
    <property type="match status" value="1"/>
</dbReference>
<dbReference type="PIRSF" id="PIRSF001413">
    <property type="entry name" value="Trp_syn_beta"/>
    <property type="match status" value="1"/>
</dbReference>
<dbReference type="SUPFAM" id="SSF53686">
    <property type="entry name" value="Tryptophan synthase beta subunit-like PLP-dependent enzymes"/>
    <property type="match status" value="1"/>
</dbReference>
<dbReference type="PROSITE" id="PS00168">
    <property type="entry name" value="TRP_SYNTHASE_BETA"/>
    <property type="match status" value="1"/>
</dbReference>
<feature type="initiator methionine" description="Removed">
    <location>
        <position position="1"/>
    </location>
</feature>
<feature type="chain" id="PRO_0000098994" description="Tryptophan synthase beta chain">
    <location>
        <begin position="2"/>
        <end position="397"/>
    </location>
</feature>
<feature type="modified residue" description="N6-(pyridoxal phosphate)lysine">
    <location>
        <position position="87"/>
    </location>
</feature>
<feature type="sequence conflict" description="In Ref. 1; CAA24667/AAA27234." evidence="2" ref="1">
    <original>S</original>
    <variation>R</variation>
    <location>
        <position position="34"/>
    </location>
</feature>
<feature type="strand" evidence="6">
    <location>
        <begin position="7"/>
        <end position="9"/>
    </location>
</feature>
<feature type="strand" evidence="7">
    <location>
        <begin position="12"/>
        <end position="17"/>
    </location>
</feature>
<feature type="helix" evidence="7">
    <location>
        <begin position="19"/>
        <end position="21"/>
    </location>
</feature>
<feature type="helix" evidence="7">
    <location>
        <begin position="22"/>
        <end position="36"/>
    </location>
</feature>
<feature type="helix" evidence="7">
    <location>
        <begin position="39"/>
        <end position="51"/>
    </location>
</feature>
<feature type="turn" evidence="5">
    <location>
        <begin position="52"/>
        <end position="54"/>
    </location>
</feature>
<feature type="strand" evidence="7">
    <location>
        <begin position="59"/>
        <end position="61"/>
    </location>
</feature>
<feature type="turn" evidence="7">
    <location>
        <begin position="64"/>
        <end position="68"/>
    </location>
</feature>
<feature type="strand" evidence="7">
    <location>
        <begin position="69"/>
        <end position="77"/>
    </location>
</feature>
<feature type="helix" evidence="7">
    <location>
        <begin position="78"/>
        <end position="80"/>
    </location>
</feature>
<feature type="helix" evidence="7">
    <location>
        <begin position="87"/>
        <end position="100"/>
    </location>
</feature>
<feature type="strand" evidence="7">
    <location>
        <begin position="105"/>
        <end position="113"/>
    </location>
</feature>
<feature type="helix" evidence="7">
    <location>
        <begin position="114"/>
        <end position="126"/>
    </location>
</feature>
<feature type="strand" evidence="7">
    <location>
        <begin position="129"/>
        <end position="135"/>
    </location>
</feature>
<feature type="helix" evidence="7">
    <location>
        <begin position="136"/>
        <end position="141"/>
    </location>
</feature>
<feature type="helix" evidence="7">
    <location>
        <begin position="143"/>
        <end position="151"/>
    </location>
</feature>
<feature type="strand" evidence="7">
    <location>
        <begin position="155"/>
        <end position="159"/>
    </location>
</feature>
<feature type="strand" evidence="8">
    <location>
        <begin position="161"/>
        <end position="163"/>
    </location>
</feature>
<feature type="helix" evidence="7">
    <location>
        <begin position="166"/>
        <end position="177"/>
    </location>
</feature>
<feature type="turn" evidence="7">
    <location>
        <begin position="178"/>
        <end position="183"/>
    </location>
</feature>
<feature type="strand" evidence="7">
    <location>
        <begin position="184"/>
        <end position="186"/>
    </location>
</feature>
<feature type="strand" evidence="4">
    <location>
        <begin position="189"/>
        <end position="191"/>
    </location>
</feature>
<feature type="helix" evidence="7">
    <location>
        <begin position="197"/>
        <end position="203"/>
    </location>
</feature>
<feature type="turn" evidence="7">
    <location>
        <begin position="204"/>
        <end position="206"/>
    </location>
</feature>
<feature type="helix" evidence="7">
    <location>
        <begin position="207"/>
        <end position="220"/>
    </location>
</feature>
<feature type="strand" evidence="7">
    <location>
        <begin position="225"/>
        <end position="230"/>
    </location>
</feature>
<feature type="strand" evidence="7">
    <location>
        <begin position="232"/>
        <end position="234"/>
    </location>
</feature>
<feature type="helix" evidence="7">
    <location>
        <begin position="235"/>
        <end position="241"/>
    </location>
</feature>
<feature type="helix" evidence="7">
    <location>
        <begin position="242"/>
        <end position="244"/>
    </location>
</feature>
<feature type="strand" evidence="7">
    <location>
        <begin position="250"/>
        <end position="259"/>
    </location>
</feature>
<feature type="helix" evidence="7">
    <location>
        <begin position="262"/>
        <end position="264"/>
    </location>
</feature>
<feature type="helix" evidence="7">
    <location>
        <begin position="270"/>
        <end position="273"/>
    </location>
</feature>
<feature type="strand" evidence="7">
    <location>
        <begin position="274"/>
        <end position="279"/>
    </location>
</feature>
<feature type="strand" evidence="7">
    <location>
        <begin position="281"/>
        <end position="286"/>
    </location>
</feature>
<feature type="strand" evidence="3">
    <location>
        <begin position="290"/>
        <end position="292"/>
    </location>
</feature>
<feature type="helix" evidence="7">
    <location>
        <begin position="302"/>
        <end position="304"/>
    </location>
</feature>
<feature type="helix" evidence="7">
    <location>
        <begin position="311"/>
        <end position="318"/>
    </location>
</feature>
<feature type="strand" evidence="7">
    <location>
        <begin position="321"/>
        <end position="328"/>
    </location>
</feature>
<feature type="helix" evidence="7">
    <location>
        <begin position="329"/>
        <end position="343"/>
    </location>
</feature>
<feature type="helix" evidence="7">
    <location>
        <begin position="349"/>
        <end position="364"/>
    </location>
</feature>
<feature type="strand" evidence="7">
    <location>
        <begin position="370"/>
        <end position="376"/>
    </location>
</feature>
<feature type="strand" evidence="7">
    <location>
        <begin position="378"/>
        <end position="380"/>
    </location>
</feature>
<feature type="helix" evidence="7">
    <location>
        <begin position="381"/>
        <end position="383"/>
    </location>
</feature>
<feature type="helix" evidence="7">
    <location>
        <begin position="384"/>
        <end position="393"/>
    </location>
</feature>
<accession>P0A2K1</accession>
<accession>P00933</accession>
<accession>Q56141</accession>